<keyword id="KW-0413">Isomerase</keyword>
<keyword id="KW-0460">Magnesium</keyword>
<keyword id="KW-0479">Metal-binding</keyword>
<keyword id="KW-0597">Phosphoprotein</keyword>
<keyword id="KW-1185">Reference proteome</keyword>
<comment type="function">
    <text evidence="1">Catalyzes the conversion of glucosamine-6-phosphate to glucosamine-1-phosphate.</text>
</comment>
<comment type="catalytic activity">
    <reaction evidence="1">
        <text>alpha-D-glucosamine 1-phosphate = D-glucosamine 6-phosphate</text>
        <dbReference type="Rhea" id="RHEA:23424"/>
        <dbReference type="ChEBI" id="CHEBI:58516"/>
        <dbReference type="ChEBI" id="CHEBI:58725"/>
        <dbReference type="EC" id="5.4.2.10"/>
    </reaction>
</comment>
<comment type="cofactor">
    <cofactor evidence="1">
        <name>Mg(2+)</name>
        <dbReference type="ChEBI" id="CHEBI:18420"/>
    </cofactor>
    <text evidence="1">Binds 1 Mg(2+) ion per subunit.</text>
</comment>
<comment type="PTM">
    <text evidence="1">Activated by phosphorylation.</text>
</comment>
<comment type="similarity">
    <text evidence="1">Belongs to the phosphohexose mutase family.</text>
</comment>
<accession>B6ITH3</accession>
<proteinExistence type="inferred from homology"/>
<gene>
    <name evidence="1" type="primary">glmM</name>
    <name type="ordered locus">RC1_1794</name>
</gene>
<sequence>MTRRLFGTDGIRGTANTDPMTAEMALKVAMATAAQFRRGSHRHVVVIAKDTRLSGYMLEPALTAGFVSMGMDVVLVGPLPTPAVAMLTRSLRADLGVMVSASHNPFHDNGIKLFGPDGYKLSDEMEAAIEARIAADGAAGGPAADLAGPRDLGRASRLEDAPGRYIEQVKASFPRGLRLDGLKIVVDCANGAAYRVAPKVLWELGAEVVPLAVGPDGFNINRDCGATAPAAMRAAVLEHKAHLGLALDGDADRLILADESGTQIDGDQIMALIGRSWAEDGRLKGGGVVATVMSNLGLELFLRDRGLTLVRTPVGDRYVVEHMREYGFNVGGEQSGHIVLSDFATTGDGLLAALQVLAEIQRTGRPASEVLRVFQPLPQLLRNVRFDPAGGVRPLEAAGVQAAIRAGEARLGGRGRVLIRKSGTEPLIRVMAEGEDEGLVASVVADIVAAVEAATVPRAAGEAATVTQVQPAE</sequence>
<dbReference type="EC" id="5.4.2.10" evidence="1"/>
<dbReference type="EMBL" id="CP000613">
    <property type="protein sequence ID" value="ACI99191.1"/>
    <property type="molecule type" value="Genomic_DNA"/>
</dbReference>
<dbReference type="RefSeq" id="WP_012566976.1">
    <property type="nucleotide sequence ID" value="NC_011420.2"/>
</dbReference>
<dbReference type="SMR" id="B6ITH3"/>
<dbReference type="STRING" id="414684.RC1_1794"/>
<dbReference type="KEGG" id="rce:RC1_1794"/>
<dbReference type="eggNOG" id="COG1109">
    <property type="taxonomic scope" value="Bacteria"/>
</dbReference>
<dbReference type="HOGENOM" id="CLU_016950_7_0_5"/>
<dbReference type="OrthoDB" id="9803322at2"/>
<dbReference type="Proteomes" id="UP000001591">
    <property type="component" value="Chromosome"/>
</dbReference>
<dbReference type="GO" id="GO:0005829">
    <property type="term" value="C:cytosol"/>
    <property type="evidence" value="ECO:0007669"/>
    <property type="project" value="TreeGrafter"/>
</dbReference>
<dbReference type="GO" id="GO:0000287">
    <property type="term" value="F:magnesium ion binding"/>
    <property type="evidence" value="ECO:0007669"/>
    <property type="project" value="UniProtKB-UniRule"/>
</dbReference>
<dbReference type="GO" id="GO:0008966">
    <property type="term" value="F:phosphoglucosamine mutase activity"/>
    <property type="evidence" value="ECO:0007669"/>
    <property type="project" value="UniProtKB-UniRule"/>
</dbReference>
<dbReference type="GO" id="GO:0004615">
    <property type="term" value="F:phosphomannomutase activity"/>
    <property type="evidence" value="ECO:0007669"/>
    <property type="project" value="TreeGrafter"/>
</dbReference>
<dbReference type="GO" id="GO:0005975">
    <property type="term" value="P:carbohydrate metabolic process"/>
    <property type="evidence" value="ECO:0007669"/>
    <property type="project" value="InterPro"/>
</dbReference>
<dbReference type="GO" id="GO:0009252">
    <property type="term" value="P:peptidoglycan biosynthetic process"/>
    <property type="evidence" value="ECO:0007669"/>
    <property type="project" value="TreeGrafter"/>
</dbReference>
<dbReference type="GO" id="GO:0006048">
    <property type="term" value="P:UDP-N-acetylglucosamine biosynthetic process"/>
    <property type="evidence" value="ECO:0007669"/>
    <property type="project" value="TreeGrafter"/>
</dbReference>
<dbReference type="CDD" id="cd05802">
    <property type="entry name" value="GlmM"/>
    <property type="match status" value="1"/>
</dbReference>
<dbReference type="FunFam" id="3.30.310.50:FF:000001">
    <property type="entry name" value="Phosphoglucosamine mutase"/>
    <property type="match status" value="1"/>
</dbReference>
<dbReference type="FunFam" id="3.40.120.10:FF:000001">
    <property type="entry name" value="Phosphoglucosamine mutase"/>
    <property type="match status" value="1"/>
</dbReference>
<dbReference type="FunFam" id="3.40.120.10:FF:000002">
    <property type="entry name" value="Phosphoglucosamine mutase"/>
    <property type="match status" value="1"/>
</dbReference>
<dbReference type="Gene3D" id="3.40.120.10">
    <property type="entry name" value="Alpha-D-Glucose-1,6-Bisphosphate, subunit A, domain 3"/>
    <property type="match status" value="3"/>
</dbReference>
<dbReference type="Gene3D" id="3.30.310.50">
    <property type="entry name" value="Alpha-D-phosphohexomutase, C-terminal domain"/>
    <property type="match status" value="1"/>
</dbReference>
<dbReference type="HAMAP" id="MF_01554_B">
    <property type="entry name" value="GlmM_B"/>
    <property type="match status" value="1"/>
</dbReference>
<dbReference type="InterPro" id="IPR005844">
    <property type="entry name" value="A-D-PHexomutase_a/b/a-I"/>
</dbReference>
<dbReference type="InterPro" id="IPR016055">
    <property type="entry name" value="A-D-PHexomutase_a/b/a-I/II/III"/>
</dbReference>
<dbReference type="InterPro" id="IPR005845">
    <property type="entry name" value="A-D-PHexomutase_a/b/a-II"/>
</dbReference>
<dbReference type="InterPro" id="IPR005846">
    <property type="entry name" value="A-D-PHexomutase_a/b/a-III"/>
</dbReference>
<dbReference type="InterPro" id="IPR005843">
    <property type="entry name" value="A-D-PHexomutase_C"/>
</dbReference>
<dbReference type="InterPro" id="IPR036900">
    <property type="entry name" value="A-D-PHexomutase_C_sf"/>
</dbReference>
<dbReference type="InterPro" id="IPR016066">
    <property type="entry name" value="A-D-PHexomutase_CS"/>
</dbReference>
<dbReference type="InterPro" id="IPR005841">
    <property type="entry name" value="Alpha-D-phosphohexomutase_SF"/>
</dbReference>
<dbReference type="InterPro" id="IPR006352">
    <property type="entry name" value="GlmM_bact"/>
</dbReference>
<dbReference type="InterPro" id="IPR050060">
    <property type="entry name" value="Phosphoglucosamine_mutase"/>
</dbReference>
<dbReference type="NCBIfam" id="TIGR01455">
    <property type="entry name" value="glmM"/>
    <property type="match status" value="1"/>
</dbReference>
<dbReference type="NCBIfam" id="NF008139">
    <property type="entry name" value="PRK10887.1"/>
    <property type="match status" value="1"/>
</dbReference>
<dbReference type="PANTHER" id="PTHR42946:SF1">
    <property type="entry name" value="PHOSPHOGLUCOMUTASE (ALPHA-D-GLUCOSE-1,6-BISPHOSPHATE-DEPENDENT)"/>
    <property type="match status" value="1"/>
</dbReference>
<dbReference type="PANTHER" id="PTHR42946">
    <property type="entry name" value="PHOSPHOHEXOSE MUTASE"/>
    <property type="match status" value="1"/>
</dbReference>
<dbReference type="Pfam" id="PF02878">
    <property type="entry name" value="PGM_PMM_I"/>
    <property type="match status" value="1"/>
</dbReference>
<dbReference type="Pfam" id="PF02879">
    <property type="entry name" value="PGM_PMM_II"/>
    <property type="match status" value="1"/>
</dbReference>
<dbReference type="Pfam" id="PF02880">
    <property type="entry name" value="PGM_PMM_III"/>
    <property type="match status" value="1"/>
</dbReference>
<dbReference type="Pfam" id="PF00408">
    <property type="entry name" value="PGM_PMM_IV"/>
    <property type="match status" value="1"/>
</dbReference>
<dbReference type="PRINTS" id="PR00509">
    <property type="entry name" value="PGMPMM"/>
</dbReference>
<dbReference type="SUPFAM" id="SSF55957">
    <property type="entry name" value="Phosphoglucomutase, C-terminal domain"/>
    <property type="match status" value="1"/>
</dbReference>
<dbReference type="SUPFAM" id="SSF53738">
    <property type="entry name" value="Phosphoglucomutase, first 3 domains"/>
    <property type="match status" value="3"/>
</dbReference>
<dbReference type="PROSITE" id="PS00710">
    <property type="entry name" value="PGM_PMM"/>
    <property type="match status" value="1"/>
</dbReference>
<feature type="chain" id="PRO_1000201132" description="Phosphoglucosamine mutase">
    <location>
        <begin position="1"/>
        <end position="473"/>
    </location>
</feature>
<feature type="active site" description="Phosphoserine intermediate" evidence="1">
    <location>
        <position position="102"/>
    </location>
</feature>
<feature type="binding site" description="via phosphate group" evidence="1">
    <location>
        <position position="102"/>
    </location>
    <ligand>
        <name>Mg(2+)</name>
        <dbReference type="ChEBI" id="CHEBI:18420"/>
    </ligand>
</feature>
<feature type="binding site" evidence="1">
    <location>
        <position position="248"/>
    </location>
    <ligand>
        <name>Mg(2+)</name>
        <dbReference type="ChEBI" id="CHEBI:18420"/>
    </ligand>
</feature>
<feature type="binding site" evidence="1">
    <location>
        <position position="250"/>
    </location>
    <ligand>
        <name>Mg(2+)</name>
        <dbReference type="ChEBI" id="CHEBI:18420"/>
    </ligand>
</feature>
<feature type="binding site" evidence="1">
    <location>
        <position position="252"/>
    </location>
    <ligand>
        <name>Mg(2+)</name>
        <dbReference type="ChEBI" id="CHEBI:18420"/>
    </ligand>
</feature>
<feature type="modified residue" description="Phosphoserine" evidence="1">
    <location>
        <position position="102"/>
    </location>
</feature>
<reference key="1">
    <citation type="submission" date="2007-03" db="EMBL/GenBank/DDBJ databases">
        <title>Genome sequence of Rhodospirillum centenum.</title>
        <authorList>
            <person name="Touchman J.W."/>
            <person name="Bauer C."/>
            <person name="Blankenship R.E."/>
        </authorList>
    </citation>
    <scope>NUCLEOTIDE SEQUENCE [LARGE SCALE GENOMIC DNA]</scope>
    <source>
        <strain>ATCC 51521 / SW</strain>
    </source>
</reference>
<protein>
    <recommendedName>
        <fullName evidence="1">Phosphoglucosamine mutase</fullName>
        <ecNumber evidence="1">5.4.2.10</ecNumber>
    </recommendedName>
</protein>
<name>GLMM_RHOCS</name>
<evidence type="ECO:0000255" key="1">
    <source>
        <dbReference type="HAMAP-Rule" id="MF_01554"/>
    </source>
</evidence>
<organism>
    <name type="scientific">Rhodospirillum centenum (strain ATCC 51521 / SW)</name>
    <dbReference type="NCBI Taxonomy" id="414684"/>
    <lineage>
        <taxon>Bacteria</taxon>
        <taxon>Pseudomonadati</taxon>
        <taxon>Pseudomonadota</taxon>
        <taxon>Alphaproteobacteria</taxon>
        <taxon>Rhodospirillales</taxon>
        <taxon>Rhodospirillaceae</taxon>
        <taxon>Rhodospirillum</taxon>
    </lineage>
</organism>